<dbReference type="EMBL" id="AF073799">
    <property type="protein sequence ID" value="AAC35944.1"/>
    <property type="molecule type" value="mRNA"/>
</dbReference>
<dbReference type="EMBL" id="AF067733">
    <property type="protein sequence ID" value="AAC18860.1"/>
    <property type="molecule type" value="mRNA"/>
</dbReference>
<dbReference type="EMBL" id="AF129514">
    <property type="protein sequence ID" value="AAD47348.2"/>
    <property type="molecule type" value="Genomic_DNA"/>
</dbReference>
<dbReference type="EMBL" id="AF129513">
    <property type="protein sequence ID" value="AAD47348.2"/>
    <property type="status" value="JOINED"/>
    <property type="molecule type" value="Genomic_DNA"/>
</dbReference>
<dbReference type="EMBL" id="AY587582">
    <property type="protein sequence ID" value="AAS98215.1"/>
    <property type="molecule type" value="mRNA"/>
</dbReference>
<dbReference type="EMBL" id="AB065934">
    <property type="protein sequence ID" value="BAC06149.1"/>
    <property type="molecule type" value="Genomic_DNA"/>
</dbReference>
<dbReference type="EMBL" id="Z97630">
    <property type="status" value="NOT_ANNOTATED_CDS"/>
    <property type="molecule type" value="Genomic_DNA"/>
</dbReference>
<dbReference type="EMBL" id="CH471095">
    <property type="protein sequence ID" value="EAW60191.1"/>
    <property type="molecule type" value="Genomic_DNA"/>
</dbReference>
<dbReference type="CCDS" id="CCDS13958.1"/>
<dbReference type="RefSeq" id="NP_003605.1">
    <property type="nucleotide sequence ID" value="NM_003614.2"/>
</dbReference>
<dbReference type="SMR" id="O60755"/>
<dbReference type="BioGRID" id="114058">
    <property type="interactions" value="30"/>
</dbReference>
<dbReference type="FunCoup" id="O60755">
    <property type="interactions" value="504"/>
</dbReference>
<dbReference type="IntAct" id="O60755">
    <property type="interactions" value="4"/>
</dbReference>
<dbReference type="STRING" id="9606.ENSP00000249041"/>
<dbReference type="BindingDB" id="O60755"/>
<dbReference type="ChEMBL" id="CHEMBL2731"/>
<dbReference type="GuidetoPHARMACOLOGY" id="245"/>
<dbReference type="GlyCosmos" id="O60755">
    <property type="glycosylation" value="1 site, No reported glycans"/>
</dbReference>
<dbReference type="GlyGen" id="O60755">
    <property type="glycosylation" value="1 site"/>
</dbReference>
<dbReference type="iPTMnet" id="O60755"/>
<dbReference type="PhosphoSitePlus" id="O60755"/>
<dbReference type="BioMuta" id="GALR3"/>
<dbReference type="MassIVE" id="O60755"/>
<dbReference type="PaxDb" id="9606-ENSP00000249041"/>
<dbReference type="Antibodypedia" id="12147">
    <property type="antibodies" value="248 antibodies from 32 providers"/>
</dbReference>
<dbReference type="DNASU" id="8484"/>
<dbReference type="Ensembl" id="ENST00000249041.3">
    <property type="protein sequence ID" value="ENSP00000249041.2"/>
    <property type="gene ID" value="ENSG00000128310.3"/>
</dbReference>
<dbReference type="GeneID" id="8484"/>
<dbReference type="KEGG" id="hsa:8484"/>
<dbReference type="MANE-Select" id="ENST00000249041.3">
    <property type="protein sequence ID" value="ENSP00000249041.2"/>
    <property type="RefSeq nucleotide sequence ID" value="NM_003614.2"/>
    <property type="RefSeq protein sequence ID" value="NP_003605.1"/>
</dbReference>
<dbReference type="UCSC" id="uc003aub.1">
    <property type="organism name" value="human"/>
</dbReference>
<dbReference type="AGR" id="HGNC:4134"/>
<dbReference type="CTD" id="8484"/>
<dbReference type="DisGeNET" id="8484"/>
<dbReference type="GeneCards" id="GALR3"/>
<dbReference type="HGNC" id="HGNC:4134">
    <property type="gene designation" value="GALR3"/>
</dbReference>
<dbReference type="HPA" id="ENSG00000128310">
    <property type="expression patterns" value="Not detected"/>
</dbReference>
<dbReference type="MIM" id="603692">
    <property type="type" value="gene"/>
</dbReference>
<dbReference type="neXtProt" id="NX_O60755"/>
<dbReference type="OpenTargets" id="ENSG00000128310"/>
<dbReference type="PharmGKB" id="PA28547"/>
<dbReference type="VEuPathDB" id="HostDB:ENSG00000128310"/>
<dbReference type="eggNOG" id="KOG3656">
    <property type="taxonomic scope" value="Eukaryota"/>
</dbReference>
<dbReference type="GeneTree" id="ENSGT01130000278263"/>
<dbReference type="HOGENOM" id="CLU_009579_6_4_1"/>
<dbReference type="InParanoid" id="O60755"/>
<dbReference type="OMA" id="YQIVHYH"/>
<dbReference type="OrthoDB" id="5964776at2759"/>
<dbReference type="PAN-GO" id="O60755">
    <property type="GO annotations" value="4 GO annotations based on evolutionary models"/>
</dbReference>
<dbReference type="PhylomeDB" id="O60755"/>
<dbReference type="TreeFam" id="TF315737"/>
<dbReference type="PathwayCommons" id="O60755"/>
<dbReference type="Reactome" id="R-HSA-375276">
    <property type="pathway name" value="Peptide ligand-binding receptors"/>
</dbReference>
<dbReference type="Reactome" id="R-HSA-418594">
    <property type="pathway name" value="G alpha (i) signalling events"/>
</dbReference>
<dbReference type="SignaLink" id="O60755"/>
<dbReference type="SIGNOR" id="O60755"/>
<dbReference type="BioGRID-ORCS" id="8484">
    <property type="hits" value="18 hits in 1140 CRISPR screens"/>
</dbReference>
<dbReference type="ChiTaRS" id="GALR3">
    <property type="organism name" value="human"/>
</dbReference>
<dbReference type="GeneWiki" id="Galanin_receptor_3"/>
<dbReference type="GenomeRNAi" id="8484"/>
<dbReference type="Pharos" id="O60755">
    <property type="development level" value="Tchem"/>
</dbReference>
<dbReference type="PRO" id="PR:O60755"/>
<dbReference type="Proteomes" id="UP000005640">
    <property type="component" value="Chromosome 22"/>
</dbReference>
<dbReference type="RNAct" id="O60755">
    <property type="molecule type" value="protein"/>
</dbReference>
<dbReference type="Bgee" id="ENSG00000128310">
    <property type="expression patterns" value="Expressed in cerebellar hemisphere and 20 other cell types or tissues"/>
</dbReference>
<dbReference type="GO" id="GO:0005929">
    <property type="term" value="C:cilium"/>
    <property type="evidence" value="ECO:0000314"/>
    <property type="project" value="MGI"/>
</dbReference>
<dbReference type="GO" id="GO:0016020">
    <property type="term" value="C:membrane"/>
    <property type="evidence" value="ECO:0000304"/>
    <property type="project" value="ProtInc"/>
</dbReference>
<dbReference type="GO" id="GO:0097730">
    <property type="term" value="C:non-motile cilium"/>
    <property type="evidence" value="ECO:0007669"/>
    <property type="project" value="Ensembl"/>
</dbReference>
<dbReference type="GO" id="GO:0005886">
    <property type="term" value="C:plasma membrane"/>
    <property type="evidence" value="ECO:0000318"/>
    <property type="project" value="GO_Central"/>
</dbReference>
<dbReference type="GO" id="GO:0045202">
    <property type="term" value="C:synapse"/>
    <property type="evidence" value="ECO:0007669"/>
    <property type="project" value="GOC"/>
</dbReference>
<dbReference type="GO" id="GO:0004966">
    <property type="term" value="F:galanin receptor activity"/>
    <property type="evidence" value="ECO:0000314"/>
    <property type="project" value="UniProtKB"/>
</dbReference>
<dbReference type="GO" id="GO:0017046">
    <property type="term" value="F:peptide hormone binding"/>
    <property type="evidence" value="ECO:0000314"/>
    <property type="project" value="UniProtKB"/>
</dbReference>
<dbReference type="GO" id="GO:0007188">
    <property type="term" value="P:adenylate cyclase-modulating G protein-coupled receptor signaling pathway"/>
    <property type="evidence" value="ECO:0000318"/>
    <property type="project" value="GO_Central"/>
</dbReference>
<dbReference type="GO" id="GO:0007268">
    <property type="term" value="P:chemical synaptic transmission"/>
    <property type="evidence" value="ECO:0000304"/>
    <property type="project" value="ProtInc"/>
</dbReference>
<dbReference type="GO" id="GO:0007631">
    <property type="term" value="P:feeding behavior"/>
    <property type="evidence" value="ECO:0000304"/>
    <property type="project" value="ProtInc"/>
</dbReference>
<dbReference type="GO" id="GO:0007187">
    <property type="term" value="P:G protein-coupled receptor signaling pathway, coupled to cyclic nucleotide second messenger"/>
    <property type="evidence" value="ECO:0000314"/>
    <property type="project" value="GO_Central"/>
</dbReference>
<dbReference type="GO" id="GO:0090663">
    <property type="term" value="P:galanin-activated signaling pathway"/>
    <property type="evidence" value="ECO:0000314"/>
    <property type="project" value="GO_Central"/>
</dbReference>
<dbReference type="GO" id="GO:0007611">
    <property type="term" value="P:learning or memory"/>
    <property type="evidence" value="ECO:0000304"/>
    <property type="project" value="ProtInc"/>
</dbReference>
<dbReference type="GO" id="GO:0007218">
    <property type="term" value="P:neuropeptide signaling pathway"/>
    <property type="evidence" value="ECO:0000318"/>
    <property type="project" value="GO_Central"/>
</dbReference>
<dbReference type="GO" id="GO:0045944">
    <property type="term" value="P:positive regulation of transcription by RNA polymerase II"/>
    <property type="evidence" value="ECO:0000314"/>
    <property type="project" value="UniProtKB"/>
</dbReference>
<dbReference type="CDD" id="cd15097">
    <property type="entry name" value="7tmA_Gal2_Gal3_R"/>
    <property type="match status" value="1"/>
</dbReference>
<dbReference type="FunFam" id="1.20.1070.10:FF:000244">
    <property type="entry name" value="galanin receptor type 3"/>
    <property type="match status" value="1"/>
</dbReference>
<dbReference type="Gene3D" id="1.20.1070.10">
    <property type="entry name" value="Rhodopsin 7-helix transmembrane proteins"/>
    <property type="match status" value="1"/>
</dbReference>
<dbReference type="InterPro" id="IPR000405">
    <property type="entry name" value="Galanin_rcpt"/>
</dbReference>
<dbReference type="InterPro" id="IPR003908">
    <property type="entry name" value="Galnin_3_rcpt"/>
</dbReference>
<dbReference type="InterPro" id="IPR000276">
    <property type="entry name" value="GPCR_Rhodpsn"/>
</dbReference>
<dbReference type="InterPro" id="IPR017452">
    <property type="entry name" value="GPCR_Rhodpsn_7TM"/>
</dbReference>
<dbReference type="PANTHER" id="PTHR45695:SF33">
    <property type="entry name" value="GALANIN RECEPTOR 3"/>
    <property type="match status" value="1"/>
</dbReference>
<dbReference type="PANTHER" id="PTHR45695">
    <property type="entry name" value="LEUCOKININ RECEPTOR-RELATED"/>
    <property type="match status" value="1"/>
</dbReference>
<dbReference type="Pfam" id="PF00001">
    <property type="entry name" value="7tm_1"/>
    <property type="match status" value="1"/>
</dbReference>
<dbReference type="PRINTS" id="PR01420">
    <property type="entry name" value="GALANIN3R"/>
</dbReference>
<dbReference type="PRINTS" id="PR00663">
    <property type="entry name" value="GALANINR"/>
</dbReference>
<dbReference type="PRINTS" id="PR00237">
    <property type="entry name" value="GPCRRHODOPSN"/>
</dbReference>
<dbReference type="SUPFAM" id="SSF81321">
    <property type="entry name" value="Family A G protein-coupled receptor-like"/>
    <property type="match status" value="1"/>
</dbReference>
<dbReference type="PROSITE" id="PS00237">
    <property type="entry name" value="G_PROTEIN_RECEP_F1_1"/>
    <property type="match status" value="1"/>
</dbReference>
<dbReference type="PROSITE" id="PS50262">
    <property type="entry name" value="G_PROTEIN_RECEP_F1_2"/>
    <property type="match status" value="1"/>
</dbReference>
<gene>
    <name type="primary">GALR3</name>
    <name type="synonym">GALNR3</name>
</gene>
<proteinExistence type="evidence at protein level"/>
<keyword id="KW-1003">Cell membrane</keyword>
<keyword id="KW-1015">Disulfide bond</keyword>
<keyword id="KW-0297">G-protein coupled receptor</keyword>
<keyword id="KW-0325">Glycoprotein</keyword>
<keyword id="KW-0449">Lipoprotein</keyword>
<keyword id="KW-0472">Membrane</keyword>
<keyword id="KW-0564">Palmitate</keyword>
<keyword id="KW-0675">Receptor</keyword>
<keyword id="KW-1185">Reference proteome</keyword>
<keyword id="KW-0807">Transducer</keyword>
<keyword id="KW-0812">Transmembrane</keyword>
<keyword id="KW-1133">Transmembrane helix</keyword>
<name>GALR3_HUMAN</name>
<accession>O60755</accession>
<accession>Q53YJ4</accession>
<comment type="function">
    <text evidence="5 6 7 8">Receptor for the hormone galanin (PubMed:25691535). Receptor for the hormone spexin-1 (PubMed:24517231).</text>
</comment>
<comment type="subcellular location">
    <subcellularLocation>
        <location>Cell membrane</location>
        <topology>Multi-pass membrane protein</topology>
    </subcellularLocation>
</comment>
<comment type="similarity">
    <text evidence="3">Belongs to the G-protein coupled receptor 1 family.</text>
</comment>
<feature type="chain" id="PRO_0000069469" description="Galanin receptor type 3">
    <location>
        <begin position="1"/>
        <end position="368"/>
    </location>
</feature>
<feature type="topological domain" description="Extracellular" evidence="2">
    <location>
        <begin position="1"/>
        <end position="20"/>
    </location>
</feature>
<feature type="transmembrane region" description="Helical; Name=1" evidence="2">
    <location>
        <begin position="21"/>
        <end position="41"/>
    </location>
</feature>
<feature type="topological domain" description="Cytoplasmic" evidence="2">
    <location>
        <begin position="42"/>
        <end position="57"/>
    </location>
</feature>
<feature type="transmembrane region" description="Helical; Name=2" evidence="2">
    <location>
        <begin position="58"/>
        <end position="78"/>
    </location>
</feature>
<feature type="topological domain" description="Extracellular" evidence="2">
    <location>
        <begin position="79"/>
        <end position="96"/>
    </location>
</feature>
<feature type="transmembrane region" description="Helical; Name=3" evidence="2">
    <location>
        <begin position="97"/>
        <end position="118"/>
    </location>
</feature>
<feature type="topological domain" description="Cytoplasmic" evidence="2">
    <location>
        <begin position="119"/>
        <end position="138"/>
    </location>
</feature>
<feature type="transmembrane region" description="Helical; Name=4" evidence="2">
    <location>
        <begin position="139"/>
        <end position="159"/>
    </location>
</feature>
<feature type="topological domain" description="Extracellular" evidence="2">
    <location>
        <begin position="160"/>
        <end position="184"/>
    </location>
</feature>
<feature type="transmembrane region" description="Helical; Name=5" evidence="2">
    <location>
        <begin position="185"/>
        <end position="205"/>
    </location>
</feature>
<feature type="topological domain" description="Cytoplasmic" evidence="2">
    <location>
        <begin position="206"/>
        <end position="236"/>
    </location>
</feature>
<feature type="transmembrane region" description="Helical; Name=6" evidence="2">
    <location>
        <begin position="237"/>
        <end position="257"/>
    </location>
</feature>
<feature type="topological domain" description="Extracellular" evidence="2">
    <location>
        <begin position="258"/>
        <end position="259"/>
    </location>
</feature>
<feature type="transmembrane region" description="Helical; Name=7" evidence="2">
    <location>
        <begin position="260"/>
        <end position="280"/>
    </location>
</feature>
<feature type="topological domain" description="Cytoplasmic" evidence="2">
    <location>
        <begin position="281"/>
        <end position="368"/>
    </location>
</feature>
<feature type="region of interest" description="Disordered" evidence="4">
    <location>
        <begin position="317"/>
        <end position="368"/>
    </location>
</feature>
<feature type="lipid moiety-binding region" description="S-palmitoyl cysteine" evidence="1">
    <location>
        <position position="308"/>
    </location>
</feature>
<feature type="glycosylation site" description="N-linked (GlcNAc...) asparagine" evidence="2">
    <location>
        <position position="6"/>
    </location>
</feature>
<feature type="disulfide bond" evidence="3">
    <location>
        <begin position="95"/>
        <end position="172"/>
    </location>
</feature>
<feature type="sequence variant" id="VAR_049387" description="In dbSNP:rs8137541.">
    <original>R</original>
    <variation>G</variation>
    <location>
        <position position="342"/>
    </location>
</feature>
<feature type="sequence variant" id="VAR_059322" description="In dbSNP:rs8137553.">
    <original>Q</original>
    <variation>R</variation>
    <location>
        <position position="349"/>
    </location>
</feature>
<evidence type="ECO:0000250" key="1"/>
<evidence type="ECO:0000255" key="2"/>
<evidence type="ECO:0000255" key="3">
    <source>
        <dbReference type="PROSITE-ProRule" id="PRU00521"/>
    </source>
</evidence>
<evidence type="ECO:0000256" key="4">
    <source>
        <dbReference type="SAM" id="MobiDB-lite"/>
    </source>
</evidence>
<evidence type="ECO:0000269" key="5">
    <source>
    </source>
</evidence>
<evidence type="ECO:0000269" key="6">
    <source>
    </source>
</evidence>
<evidence type="ECO:0000269" key="7">
    <source>
    </source>
</evidence>
<evidence type="ECO:0000269" key="8">
    <source>
    </source>
</evidence>
<protein>
    <recommendedName>
        <fullName>Galanin receptor type 3</fullName>
        <shortName>GAL3-R</shortName>
        <shortName>GALR-3</shortName>
    </recommendedName>
</protein>
<organism>
    <name type="scientific">Homo sapiens</name>
    <name type="common">Human</name>
    <dbReference type="NCBI Taxonomy" id="9606"/>
    <lineage>
        <taxon>Eukaryota</taxon>
        <taxon>Metazoa</taxon>
        <taxon>Chordata</taxon>
        <taxon>Craniata</taxon>
        <taxon>Vertebrata</taxon>
        <taxon>Euteleostomi</taxon>
        <taxon>Mammalia</taxon>
        <taxon>Eutheria</taxon>
        <taxon>Euarchontoglires</taxon>
        <taxon>Primates</taxon>
        <taxon>Haplorrhini</taxon>
        <taxon>Catarrhini</taxon>
        <taxon>Hominidae</taxon>
        <taxon>Homo</taxon>
    </lineage>
</organism>
<reference key="1">
    <citation type="journal article" date="1998" name="J. Biol. Chem.">
        <title>Cloned human and rat galanin GALR3 receptors: pharmacology and activation of G-protein inwardly rectifying K+ channels.</title>
        <authorList>
            <person name="Smith K.E."/>
            <person name="Walker M.W."/>
            <person name="Artymyshyn R."/>
            <person name="Bard J."/>
            <person name="Borowsky B."/>
            <person name="Tamm J.A."/>
            <person name="Yao W.-J."/>
            <person name="Vaysse P.J.-J."/>
            <person name="Branchek T.A."/>
            <person name="Gerald C."/>
            <person name="Jones K.A."/>
        </authorList>
    </citation>
    <scope>NUCLEOTIDE SEQUENCE [MRNA]</scope>
    <scope>FUNCTION</scope>
</reference>
<reference key="2">
    <citation type="submission" date="1998-05" db="EMBL/GenBank/DDBJ databases">
        <title>Homologue of the human galanin 2 receptor gene isolated from a human uterus cDNA library.</title>
        <authorList>
            <person name="Bennett M.M."/>
            <person name="Lescoe M.K."/>
            <person name="Gallipoli P.Z."/>
            <person name="Ramabhadran T.V."/>
        </authorList>
    </citation>
    <scope>NUCLEOTIDE SEQUENCE [MRNA]</scope>
    <source>
        <tissue>Uterus</tissue>
    </source>
</reference>
<reference key="3">
    <citation type="journal article" date="1998" name="J. Neurochem.">
        <title>Molecular characterization and expression of cloned human galanin receptors GALR2 and GALR3.</title>
        <authorList>
            <person name="Kolakowski L.F. Jr."/>
            <person name="O'Neill G.P."/>
            <person name="Howard A.D."/>
            <person name="Broussard S.R."/>
            <person name="Sullivan K.A."/>
            <person name="Feighner S.D."/>
            <person name="Sawzdargo M."/>
            <person name="Nguyen T."/>
            <person name="Kargman S."/>
            <person name="Shiao L.-L."/>
            <person name="Hreniuk D.L."/>
            <person name="Tan C.P."/>
            <person name="Evans J."/>
            <person name="Abramovitz M."/>
            <person name="Chateauneuf A."/>
            <person name="Coulombe N."/>
            <person name="Ng G."/>
            <person name="Johnson M.P."/>
            <person name="Tharian A."/>
            <person name="Khoshbouei H."/>
            <person name="George S.R."/>
            <person name="Smith R.G."/>
            <person name="O'Dowd B.F."/>
        </authorList>
    </citation>
    <scope>NUCLEOTIDE SEQUENCE [GENOMIC DNA]</scope>
    <scope>FUNCTION</scope>
</reference>
<reference key="4">
    <citation type="journal article" date="1998" name="Ann. N. Y. Acad. Sci.">
        <title>Structural organization and chromosomal localization of three human galanin receptor genes.</title>
        <authorList>
            <person name="Iismaa T.P."/>
            <person name="Fathi Z."/>
            <person name="Hort Y.J."/>
            <person name="Iben L.G."/>
            <person name="Dutton J.L."/>
            <person name="Baker E."/>
            <person name="Sutherland G.R."/>
            <person name="Shine J."/>
        </authorList>
    </citation>
    <scope>NUCLEOTIDE SEQUENCE [GENOMIC DNA]</scope>
</reference>
<reference key="5">
    <citation type="submission" date="2004-04" db="EMBL/GenBank/DDBJ databases">
        <title>Isolation of cDNA coding for galanin receptor 3 (GALR3).</title>
        <authorList>
            <person name="Eutsler E.P."/>
            <person name="Kopatz S.A."/>
            <person name="Sharma S.V."/>
        </authorList>
    </citation>
    <scope>NUCLEOTIDE SEQUENCE [MRNA]</scope>
    <source>
        <tissue>Retina</tissue>
    </source>
</reference>
<reference key="6">
    <citation type="submission" date="2001-07" db="EMBL/GenBank/DDBJ databases">
        <title>Genome-wide discovery and analysis of human seven transmembrane helix receptor genes.</title>
        <authorList>
            <person name="Suwa M."/>
            <person name="Sato T."/>
            <person name="Okouchi I."/>
            <person name="Arita M."/>
            <person name="Futami K."/>
            <person name="Matsumoto S."/>
            <person name="Tsutsumi S."/>
            <person name="Aburatani H."/>
            <person name="Asai K."/>
            <person name="Akiyama Y."/>
        </authorList>
    </citation>
    <scope>NUCLEOTIDE SEQUENCE [GENOMIC DNA]</scope>
</reference>
<reference key="7">
    <citation type="journal article" date="1999" name="Nature">
        <title>The DNA sequence of human chromosome 22.</title>
        <authorList>
            <person name="Dunham I."/>
            <person name="Hunt A.R."/>
            <person name="Collins J.E."/>
            <person name="Bruskiewich R."/>
            <person name="Beare D.M."/>
            <person name="Clamp M."/>
            <person name="Smink L.J."/>
            <person name="Ainscough R."/>
            <person name="Almeida J.P."/>
            <person name="Babbage A.K."/>
            <person name="Bagguley C."/>
            <person name="Bailey J."/>
            <person name="Barlow K.F."/>
            <person name="Bates K.N."/>
            <person name="Beasley O.P."/>
            <person name="Bird C.P."/>
            <person name="Blakey S.E."/>
            <person name="Bridgeman A.M."/>
            <person name="Buck D."/>
            <person name="Burgess J."/>
            <person name="Burrill W.D."/>
            <person name="Burton J."/>
            <person name="Carder C."/>
            <person name="Carter N.P."/>
            <person name="Chen Y."/>
            <person name="Clark G."/>
            <person name="Clegg S.M."/>
            <person name="Cobley V.E."/>
            <person name="Cole C.G."/>
            <person name="Collier R.E."/>
            <person name="Connor R."/>
            <person name="Conroy D."/>
            <person name="Corby N.R."/>
            <person name="Coville G.J."/>
            <person name="Cox A.V."/>
            <person name="Davis J."/>
            <person name="Dawson E."/>
            <person name="Dhami P.D."/>
            <person name="Dockree C."/>
            <person name="Dodsworth S.J."/>
            <person name="Durbin R.M."/>
            <person name="Ellington A.G."/>
            <person name="Evans K.L."/>
            <person name="Fey J.M."/>
            <person name="Fleming K."/>
            <person name="French L."/>
            <person name="Garner A.A."/>
            <person name="Gilbert J.G.R."/>
            <person name="Goward M.E."/>
            <person name="Grafham D.V."/>
            <person name="Griffiths M.N.D."/>
            <person name="Hall C."/>
            <person name="Hall R.E."/>
            <person name="Hall-Tamlyn G."/>
            <person name="Heathcott R.W."/>
            <person name="Ho S."/>
            <person name="Holmes S."/>
            <person name="Hunt S.E."/>
            <person name="Jones M.C."/>
            <person name="Kershaw J."/>
            <person name="Kimberley A.M."/>
            <person name="King A."/>
            <person name="Laird G.K."/>
            <person name="Langford C.F."/>
            <person name="Leversha M.A."/>
            <person name="Lloyd C."/>
            <person name="Lloyd D.M."/>
            <person name="Martyn I.D."/>
            <person name="Mashreghi-Mohammadi M."/>
            <person name="Matthews L.H."/>
            <person name="Mccann O.T."/>
            <person name="Mcclay J."/>
            <person name="Mclaren S."/>
            <person name="McMurray A.A."/>
            <person name="Milne S.A."/>
            <person name="Mortimore B.J."/>
            <person name="Odell C.N."/>
            <person name="Pavitt R."/>
            <person name="Pearce A.V."/>
            <person name="Pearson D."/>
            <person name="Phillimore B.J.C.T."/>
            <person name="Phillips S.H."/>
            <person name="Plumb R.W."/>
            <person name="Ramsay H."/>
            <person name="Ramsey Y."/>
            <person name="Rogers L."/>
            <person name="Ross M.T."/>
            <person name="Scott C.E."/>
            <person name="Sehra H.K."/>
            <person name="Skuce C.D."/>
            <person name="Smalley S."/>
            <person name="Smith M.L."/>
            <person name="Soderlund C."/>
            <person name="Spragon L."/>
            <person name="Steward C.A."/>
            <person name="Sulston J.E."/>
            <person name="Swann R.M."/>
            <person name="Vaudin M."/>
            <person name="Wall M."/>
            <person name="Wallis J.M."/>
            <person name="Whiteley M.N."/>
            <person name="Willey D.L."/>
            <person name="Williams L."/>
            <person name="Williams S.A."/>
            <person name="Williamson H."/>
            <person name="Wilmer T.E."/>
            <person name="Wilming L."/>
            <person name="Wright C.L."/>
            <person name="Hubbard T."/>
            <person name="Bentley D.R."/>
            <person name="Beck S."/>
            <person name="Rogers J."/>
            <person name="Shimizu N."/>
            <person name="Minoshima S."/>
            <person name="Kawasaki K."/>
            <person name="Sasaki T."/>
            <person name="Asakawa S."/>
            <person name="Kudoh J."/>
            <person name="Shintani A."/>
            <person name="Shibuya K."/>
            <person name="Yoshizaki Y."/>
            <person name="Aoki N."/>
            <person name="Mitsuyama S."/>
            <person name="Roe B.A."/>
            <person name="Chen F."/>
            <person name="Chu L."/>
            <person name="Crabtree J."/>
            <person name="Deschamps S."/>
            <person name="Do A."/>
            <person name="Do T."/>
            <person name="Dorman A."/>
            <person name="Fang F."/>
            <person name="Fu Y."/>
            <person name="Hu P."/>
            <person name="Hua A."/>
            <person name="Kenton S."/>
            <person name="Lai H."/>
            <person name="Lao H.I."/>
            <person name="Lewis J."/>
            <person name="Lewis S."/>
            <person name="Lin S.-P."/>
            <person name="Loh P."/>
            <person name="Malaj E."/>
            <person name="Nguyen T."/>
            <person name="Pan H."/>
            <person name="Phan S."/>
            <person name="Qi S."/>
            <person name="Qian Y."/>
            <person name="Ray L."/>
            <person name="Ren Q."/>
            <person name="Shaull S."/>
            <person name="Sloan D."/>
            <person name="Song L."/>
            <person name="Wang Q."/>
            <person name="Wang Y."/>
            <person name="Wang Z."/>
            <person name="White J."/>
            <person name="Willingham D."/>
            <person name="Wu H."/>
            <person name="Yao Z."/>
            <person name="Zhan M."/>
            <person name="Zhang G."/>
            <person name="Chissoe S."/>
            <person name="Murray J."/>
            <person name="Miller N."/>
            <person name="Minx P."/>
            <person name="Fulton R."/>
            <person name="Johnson D."/>
            <person name="Bemis G."/>
            <person name="Bentley D."/>
            <person name="Bradshaw H."/>
            <person name="Bourne S."/>
            <person name="Cordes M."/>
            <person name="Du Z."/>
            <person name="Fulton L."/>
            <person name="Goela D."/>
            <person name="Graves T."/>
            <person name="Hawkins J."/>
            <person name="Hinds K."/>
            <person name="Kemp K."/>
            <person name="Latreille P."/>
            <person name="Layman D."/>
            <person name="Ozersky P."/>
            <person name="Rohlfing T."/>
            <person name="Scheet P."/>
            <person name="Walker C."/>
            <person name="Wamsley A."/>
            <person name="Wohldmann P."/>
            <person name="Pepin K."/>
            <person name="Nelson J."/>
            <person name="Korf I."/>
            <person name="Bedell J.A."/>
            <person name="Hillier L.W."/>
            <person name="Mardis E."/>
            <person name="Waterston R."/>
            <person name="Wilson R."/>
            <person name="Emanuel B.S."/>
            <person name="Shaikh T."/>
            <person name="Kurahashi H."/>
            <person name="Saitta S."/>
            <person name="Budarf M.L."/>
            <person name="McDermid H.E."/>
            <person name="Johnson A."/>
            <person name="Wong A.C.C."/>
            <person name="Morrow B.E."/>
            <person name="Edelmann L."/>
            <person name="Kim U.J."/>
            <person name="Shizuya H."/>
            <person name="Simon M.I."/>
            <person name="Dumanski J.P."/>
            <person name="Peyrard M."/>
            <person name="Kedra D."/>
            <person name="Seroussi E."/>
            <person name="Fransson I."/>
            <person name="Tapia I."/>
            <person name="Bruder C.E."/>
            <person name="O'Brien K.P."/>
            <person name="Wilkinson P."/>
            <person name="Bodenteich A."/>
            <person name="Hartman K."/>
            <person name="Hu X."/>
            <person name="Khan A.S."/>
            <person name="Lane L."/>
            <person name="Tilahun Y."/>
            <person name="Wright H."/>
        </authorList>
    </citation>
    <scope>NUCLEOTIDE SEQUENCE [LARGE SCALE GENOMIC DNA]</scope>
</reference>
<reference key="8">
    <citation type="submission" date="2005-07" db="EMBL/GenBank/DDBJ databases">
        <authorList>
            <person name="Mural R.J."/>
            <person name="Istrail S."/>
            <person name="Sutton G.G."/>
            <person name="Florea L."/>
            <person name="Halpern A.L."/>
            <person name="Mobarry C.M."/>
            <person name="Lippert R."/>
            <person name="Walenz B."/>
            <person name="Shatkay H."/>
            <person name="Dew I."/>
            <person name="Miller J.R."/>
            <person name="Flanigan M.J."/>
            <person name="Edwards N.J."/>
            <person name="Bolanos R."/>
            <person name="Fasulo D."/>
            <person name="Halldorsson B.V."/>
            <person name="Hannenhalli S."/>
            <person name="Turner R."/>
            <person name="Yooseph S."/>
            <person name="Lu F."/>
            <person name="Nusskern D.R."/>
            <person name="Shue B.C."/>
            <person name="Zheng X.H."/>
            <person name="Zhong F."/>
            <person name="Delcher A.L."/>
            <person name="Huson D.H."/>
            <person name="Kravitz S.A."/>
            <person name="Mouchard L."/>
            <person name="Reinert K."/>
            <person name="Remington K.A."/>
            <person name="Clark A.G."/>
            <person name="Waterman M.S."/>
            <person name="Eichler E.E."/>
            <person name="Adams M.D."/>
            <person name="Hunkapiller M.W."/>
            <person name="Myers E.W."/>
            <person name="Venter J.C."/>
        </authorList>
    </citation>
    <scope>NUCLEOTIDE SEQUENCE [LARGE SCALE GENOMIC DNA]</scope>
</reference>
<reference key="9">
    <citation type="journal article" date="2014" name="Endocrinology">
        <title>Coevolution of the spexin/galanin/kisspeptin family: Spexin activates galanin receptor type II and III.</title>
        <authorList>
            <person name="Kim D.K."/>
            <person name="Yun S."/>
            <person name="Son G.H."/>
            <person name="Hwang J.I."/>
            <person name="Park C.R."/>
            <person name="Kim J.I."/>
            <person name="Kim K."/>
            <person name="Vaudry H."/>
            <person name="Seong J.Y."/>
        </authorList>
    </citation>
    <scope>FUNCTION AS A RECEPTOR FOR SPEXIN-1</scope>
</reference>
<reference key="10">
    <citation type="journal article" date="2015" name="Hum. Mol. Genet.">
        <title>Galanin pathogenic mutations in temporal lobe epilepsy.</title>
        <authorList>
            <person name="Guipponi M."/>
            <person name="Chentouf A."/>
            <person name="Webling K.E."/>
            <person name="Freimann K."/>
            <person name="Crespel A."/>
            <person name="Nobile C."/>
            <person name="Lemke J.R."/>
            <person name="Hansen J."/>
            <person name="Dorn T."/>
            <person name="Lesca G."/>
            <person name="Ryvlin P."/>
            <person name="Hirsch E."/>
            <person name="Rudolf G."/>
            <person name="Rosenberg D.S."/>
            <person name="Weber Y."/>
            <person name="Becker F."/>
            <person name="Helbig I."/>
            <person name="Muhle H."/>
            <person name="Salzmann A."/>
            <person name="Chaouch M."/>
            <person name="Oubaiche M.L."/>
            <person name="Ziglio S."/>
            <person name="Gehrig C."/>
            <person name="Santoni F."/>
            <person name="Pizzato M."/>
            <person name="Langel U."/>
            <person name="Antonarakis S.E."/>
        </authorList>
    </citation>
    <scope>FUNCTION</scope>
</reference>
<sequence length="368" mass="39573">MADAQNISLDSPGSVGAVAVPVVFALIFLLGTVGNGLVLAVLLQPGPSAWQEPGSTTDLFILNLAVADLCFILCCVPFQATIYTLDAWLFGALVCKAVHLLIYLTMYASSFTLAAVSVDRYLAVRHPLRSRALRTPRNARAAVGLVWLLAALFSAPYLSYYGTVRYGALELCVPAWEDARRRALDVATFAAGYLLPVAVVSLAYGRTLRFLWAAVGPAGAAAAEARRRATGRAGRAMLAVAALYALCWGPHHALILCFWYGRFAFSPATYACRLASHCLAYANSCLNPLVYALASRHFRARFRRLWPCGRRRRHRARRALRRVRPASSGPPGCPGDARPSGRLLAGGGQGPEPREGPVHGGEAARGPE</sequence>